<sequence length="344" mass="36946">MSTSLSYRDAGVDIDAGDQLVENIKPFAKRTMRPEVLGDLGGFGALVEIGKKYKNPVLVSGTDGVGTKLKLAFDWDKHDTVGIDLVAMSVNDILVQGAEPLFFLDYFACGKLDVPRATDVIKGIAQGCEESGCALIGGETAEMPGMYPVGEYDLAGFAVGVVEKENVITGRSIGAGDVVLGLASNGAHSNGYSLIRKIIERDNPDLDAEFDNGKTLREAVIAPTRLYVKPILAALEKFTIKGMAHITGGGITENVPRVLPENTVAQIDAKSWELPKLFQWLQKAGNVETQEMYRTFNCGIGMVVIVAAEDADAVQGLLGEQGETVYRLGLIRERQGDEHQTQVA</sequence>
<protein>
    <recommendedName>
        <fullName evidence="1">Phosphoribosylformylglycinamidine cyclo-ligase</fullName>
        <ecNumber evidence="1">6.3.3.1</ecNumber>
    </recommendedName>
    <alternativeName>
        <fullName evidence="1">AIR synthase</fullName>
    </alternativeName>
    <alternativeName>
        <fullName evidence="1">AIRS</fullName>
    </alternativeName>
    <alternativeName>
        <fullName evidence="1">Phosphoribosyl-aminoimidazole synthetase</fullName>
    </alternativeName>
</protein>
<organism>
    <name type="scientific">Neisseria meningitidis serogroup A / serotype 4A (strain DSM 15465 / Z2491)</name>
    <dbReference type="NCBI Taxonomy" id="122587"/>
    <lineage>
        <taxon>Bacteria</taxon>
        <taxon>Pseudomonadati</taxon>
        <taxon>Pseudomonadota</taxon>
        <taxon>Betaproteobacteria</taxon>
        <taxon>Neisseriales</taxon>
        <taxon>Neisseriaceae</taxon>
        <taxon>Neisseria</taxon>
    </lineage>
</organism>
<dbReference type="EC" id="6.3.3.1" evidence="1"/>
<dbReference type="EMBL" id="AL157959">
    <property type="protein sequence ID" value="CAM08586.1"/>
    <property type="molecule type" value="Genomic_DNA"/>
</dbReference>
<dbReference type="PIR" id="F81911">
    <property type="entry name" value="F81911"/>
</dbReference>
<dbReference type="RefSeq" id="WP_002226346.1">
    <property type="nucleotide sequence ID" value="NC_003116.1"/>
</dbReference>
<dbReference type="SMR" id="Q9JUA2"/>
<dbReference type="EnsemblBacteria" id="CAM08586">
    <property type="protein sequence ID" value="CAM08586"/>
    <property type="gene ID" value="NMA1421"/>
</dbReference>
<dbReference type="KEGG" id="nma:NMA1421"/>
<dbReference type="HOGENOM" id="CLU_047116_0_0_4"/>
<dbReference type="UniPathway" id="UPA00074">
    <property type="reaction ID" value="UER00129"/>
</dbReference>
<dbReference type="Proteomes" id="UP000000626">
    <property type="component" value="Chromosome"/>
</dbReference>
<dbReference type="GO" id="GO:0005829">
    <property type="term" value="C:cytosol"/>
    <property type="evidence" value="ECO:0007669"/>
    <property type="project" value="TreeGrafter"/>
</dbReference>
<dbReference type="GO" id="GO:0005524">
    <property type="term" value="F:ATP binding"/>
    <property type="evidence" value="ECO:0007669"/>
    <property type="project" value="UniProtKB-KW"/>
</dbReference>
<dbReference type="GO" id="GO:0004637">
    <property type="term" value="F:phosphoribosylamine-glycine ligase activity"/>
    <property type="evidence" value="ECO:0007669"/>
    <property type="project" value="TreeGrafter"/>
</dbReference>
<dbReference type="GO" id="GO:0004641">
    <property type="term" value="F:phosphoribosylformylglycinamidine cyclo-ligase activity"/>
    <property type="evidence" value="ECO:0007669"/>
    <property type="project" value="UniProtKB-UniRule"/>
</dbReference>
<dbReference type="GO" id="GO:0006189">
    <property type="term" value="P:'de novo' IMP biosynthetic process"/>
    <property type="evidence" value="ECO:0007669"/>
    <property type="project" value="UniProtKB-UniRule"/>
</dbReference>
<dbReference type="GO" id="GO:0046084">
    <property type="term" value="P:adenine biosynthetic process"/>
    <property type="evidence" value="ECO:0007669"/>
    <property type="project" value="TreeGrafter"/>
</dbReference>
<dbReference type="CDD" id="cd02196">
    <property type="entry name" value="PurM"/>
    <property type="match status" value="1"/>
</dbReference>
<dbReference type="FunFam" id="3.30.1330.10:FF:000001">
    <property type="entry name" value="Phosphoribosylformylglycinamidine cyclo-ligase"/>
    <property type="match status" value="1"/>
</dbReference>
<dbReference type="FunFam" id="3.90.650.10:FF:000001">
    <property type="entry name" value="Phosphoribosylformylglycinamidine cyclo-ligase"/>
    <property type="match status" value="1"/>
</dbReference>
<dbReference type="Gene3D" id="3.90.650.10">
    <property type="entry name" value="PurM-like C-terminal domain"/>
    <property type="match status" value="1"/>
</dbReference>
<dbReference type="Gene3D" id="3.30.1330.10">
    <property type="entry name" value="PurM-like, N-terminal domain"/>
    <property type="match status" value="1"/>
</dbReference>
<dbReference type="HAMAP" id="MF_00741">
    <property type="entry name" value="AIRS"/>
    <property type="match status" value="1"/>
</dbReference>
<dbReference type="InterPro" id="IPR010918">
    <property type="entry name" value="PurM-like_C_dom"/>
</dbReference>
<dbReference type="InterPro" id="IPR036676">
    <property type="entry name" value="PurM-like_C_sf"/>
</dbReference>
<dbReference type="InterPro" id="IPR016188">
    <property type="entry name" value="PurM-like_N"/>
</dbReference>
<dbReference type="InterPro" id="IPR036921">
    <property type="entry name" value="PurM-like_N_sf"/>
</dbReference>
<dbReference type="InterPro" id="IPR004733">
    <property type="entry name" value="PurM_cligase"/>
</dbReference>
<dbReference type="NCBIfam" id="TIGR00878">
    <property type="entry name" value="purM"/>
    <property type="match status" value="1"/>
</dbReference>
<dbReference type="PANTHER" id="PTHR10520:SF12">
    <property type="entry name" value="TRIFUNCTIONAL PURINE BIOSYNTHETIC PROTEIN ADENOSINE-3"/>
    <property type="match status" value="1"/>
</dbReference>
<dbReference type="PANTHER" id="PTHR10520">
    <property type="entry name" value="TRIFUNCTIONAL PURINE BIOSYNTHETIC PROTEIN ADENOSINE-3-RELATED"/>
    <property type="match status" value="1"/>
</dbReference>
<dbReference type="Pfam" id="PF00586">
    <property type="entry name" value="AIRS"/>
    <property type="match status" value="1"/>
</dbReference>
<dbReference type="Pfam" id="PF02769">
    <property type="entry name" value="AIRS_C"/>
    <property type="match status" value="1"/>
</dbReference>
<dbReference type="SUPFAM" id="SSF56042">
    <property type="entry name" value="PurM C-terminal domain-like"/>
    <property type="match status" value="1"/>
</dbReference>
<dbReference type="SUPFAM" id="SSF55326">
    <property type="entry name" value="PurM N-terminal domain-like"/>
    <property type="match status" value="1"/>
</dbReference>
<reference key="1">
    <citation type="journal article" date="2000" name="Nature">
        <title>Complete DNA sequence of a serogroup A strain of Neisseria meningitidis Z2491.</title>
        <authorList>
            <person name="Parkhill J."/>
            <person name="Achtman M."/>
            <person name="James K.D."/>
            <person name="Bentley S.D."/>
            <person name="Churcher C.M."/>
            <person name="Klee S.R."/>
            <person name="Morelli G."/>
            <person name="Basham D."/>
            <person name="Brown D."/>
            <person name="Chillingworth T."/>
            <person name="Davies R.M."/>
            <person name="Davis P."/>
            <person name="Devlin K."/>
            <person name="Feltwell T."/>
            <person name="Hamlin N."/>
            <person name="Holroyd S."/>
            <person name="Jagels K."/>
            <person name="Leather S."/>
            <person name="Moule S."/>
            <person name="Mungall K.L."/>
            <person name="Quail M.A."/>
            <person name="Rajandream M.A."/>
            <person name="Rutherford K.M."/>
            <person name="Simmonds M."/>
            <person name="Skelton J."/>
            <person name="Whitehead S."/>
            <person name="Spratt B.G."/>
            <person name="Barrell B.G."/>
        </authorList>
    </citation>
    <scope>NUCLEOTIDE SEQUENCE [LARGE SCALE GENOMIC DNA]</scope>
    <source>
        <strain>DSM 15465 / Z2491</strain>
    </source>
</reference>
<proteinExistence type="inferred from homology"/>
<evidence type="ECO:0000255" key="1">
    <source>
        <dbReference type="HAMAP-Rule" id="MF_00741"/>
    </source>
</evidence>
<comment type="catalytic activity">
    <reaction evidence="1">
        <text>2-formamido-N(1)-(5-O-phospho-beta-D-ribosyl)acetamidine + ATP = 5-amino-1-(5-phospho-beta-D-ribosyl)imidazole + ADP + phosphate + H(+)</text>
        <dbReference type="Rhea" id="RHEA:23032"/>
        <dbReference type="ChEBI" id="CHEBI:15378"/>
        <dbReference type="ChEBI" id="CHEBI:30616"/>
        <dbReference type="ChEBI" id="CHEBI:43474"/>
        <dbReference type="ChEBI" id="CHEBI:137981"/>
        <dbReference type="ChEBI" id="CHEBI:147287"/>
        <dbReference type="ChEBI" id="CHEBI:456216"/>
        <dbReference type="EC" id="6.3.3.1"/>
    </reaction>
</comment>
<comment type="pathway">
    <text evidence="1">Purine metabolism; IMP biosynthesis via de novo pathway; 5-amino-1-(5-phospho-D-ribosyl)imidazole from N(2)-formyl-N(1)-(5-phospho-D-ribosyl)glycinamide: step 2/2.</text>
</comment>
<comment type="subcellular location">
    <subcellularLocation>
        <location evidence="1">Cytoplasm</location>
    </subcellularLocation>
</comment>
<comment type="similarity">
    <text evidence="1">Belongs to the AIR synthase family.</text>
</comment>
<feature type="chain" id="PRO_0000148224" description="Phosphoribosylformylglycinamidine cyclo-ligase">
    <location>
        <begin position="1"/>
        <end position="344"/>
    </location>
</feature>
<keyword id="KW-0067">ATP-binding</keyword>
<keyword id="KW-0963">Cytoplasm</keyword>
<keyword id="KW-0436">Ligase</keyword>
<keyword id="KW-0547">Nucleotide-binding</keyword>
<keyword id="KW-0658">Purine biosynthesis</keyword>
<accession>Q9JUA2</accession>
<accession>A1IS36</accession>
<name>PUR5_NEIMA</name>
<gene>
    <name evidence="1" type="primary">purM</name>
    <name type="ordered locus">NMA1421</name>
</gene>